<dbReference type="EC" id="3.4.24.-"/>
<dbReference type="EMBL" id="AE016814">
    <property type="protein sequence ID" value="AAS50429.1"/>
    <property type="molecule type" value="Genomic_DNA"/>
</dbReference>
<dbReference type="RefSeq" id="NP_982605.1">
    <property type="nucleotide sequence ID" value="NM_207958.1"/>
</dbReference>
<dbReference type="FunCoup" id="Q75EL5">
    <property type="interactions" value="500"/>
</dbReference>
<dbReference type="STRING" id="284811.Q75EL5"/>
<dbReference type="MEROPS" id="M76.001"/>
<dbReference type="MEROPS" id="M76.002"/>
<dbReference type="EnsemblFungi" id="AAS50429">
    <property type="protein sequence ID" value="AAS50429"/>
    <property type="gene ID" value="AGOS_AAR064W"/>
</dbReference>
<dbReference type="GeneID" id="4618790"/>
<dbReference type="KEGG" id="ago:AGOS_AAR064W"/>
<dbReference type="eggNOG" id="KOG3314">
    <property type="taxonomic scope" value="Eukaryota"/>
</dbReference>
<dbReference type="HOGENOM" id="CLU_079125_0_0_1"/>
<dbReference type="InParanoid" id="Q75EL5"/>
<dbReference type="OMA" id="EAHQNCV"/>
<dbReference type="OrthoDB" id="285308at2759"/>
<dbReference type="Proteomes" id="UP000000591">
    <property type="component" value="Chromosome I"/>
</dbReference>
<dbReference type="GO" id="GO:0005743">
    <property type="term" value="C:mitochondrial inner membrane"/>
    <property type="evidence" value="ECO:0007669"/>
    <property type="project" value="UniProtKB-SubCell"/>
</dbReference>
<dbReference type="GO" id="GO:0046872">
    <property type="term" value="F:metal ion binding"/>
    <property type="evidence" value="ECO:0007669"/>
    <property type="project" value="UniProtKB-KW"/>
</dbReference>
<dbReference type="GO" id="GO:0004222">
    <property type="term" value="F:metalloendopeptidase activity"/>
    <property type="evidence" value="ECO:0007669"/>
    <property type="project" value="InterPro"/>
</dbReference>
<dbReference type="GO" id="GO:0034982">
    <property type="term" value="P:mitochondrial protein processing"/>
    <property type="evidence" value="ECO:0000318"/>
    <property type="project" value="GO_Central"/>
</dbReference>
<dbReference type="GO" id="GO:0033615">
    <property type="term" value="P:mitochondrial proton-transporting ATP synthase complex assembly"/>
    <property type="evidence" value="ECO:0000318"/>
    <property type="project" value="GO_Central"/>
</dbReference>
<dbReference type="InterPro" id="IPR019165">
    <property type="entry name" value="Peptidase_M76_ATP23"/>
</dbReference>
<dbReference type="PANTHER" id="PTHR21711">
    <property type="entry name" value="MITOCHONDRIAL INNER MEMBRANE PROTEASE"/>
    <property type="match status" value="1"/>
</dbReference>
<dbReference type="PANTHER" id="PTHR21711:SF0">
    <property type="entry name" value="MITOCHONDRIAL INNER MEMBRANE PROTEASE ATP23 HOMOLOG"/>
    <property type="match status" value="1"/>
</dbReference>
<dbReference type="Pfam" id="PF09768">
    <property type="entry name" value="Peptidase_M76"/>
    <property type="match status" value="1"/>
</dbReference>
<dbReference type="PROSITE" id="PS00142">
    <property type="entry name" value="ZINC_PROTEASE"/>
    <property type="match status" value="1"/>
</dbReference>
<organism>
    <name type="scientific">Eremothecium gossypii (strain ATCC 10895 / CBS 109.51 / FGSC 9923 / NRRL Y-1056)</name>
    <name type="common">Yeast</name>
    <name type="synonym">Ashbya gossypii</name>
    <dbReference type="NCBI Taxonomy" id="284811"/>
    <lineage>
        <taxon>Eukaryota</taxon>
        <taxon>Fungi</taxon>
        <taxon>Dikarya</taxon>
        <taxon>Ascomycota</taxon>
        <taxon>Saccharomycotina</taxon>
        <taxon>Saccharomycetes</taxon>
        <taxon>Saccharomycetales</taxon>
        <taxon>Saccharomycetaceae</taxon>
        <taxon>Eremothecium</taxon>
    </lineage>
</organism>
<protein>
    <recommendedName>
        <fullName>Mitochondrial inner membrane protease ATP23</fullName>
        <ecNumber>3.4.24.-</ecNumber>
    </recommendedName>
</protein>
<comment type="function">
    <text evidence="1">Has a dual role in the assembly of mitochondrial ATPase. Acts as a protease that removes N-terminal residues of mitochondrial ATPase CF(0) subunit 6 at the intermembrane space side. Also involved in the correct assembly of the membrane-embedded ATPase CF(0) particle, probably mediating association of subunit 6 with the subunit 9 ring (By similarity).</text>
</comment>
<comment type="subcellular location">
    <subcellularLocation>
        <location>Mitochondrion inner membrane</location>
        <topology>Peripheral membrane protein</topology>
        <orientation>Intermembrane side</orientation>
    </subcellularLocation>
    <text evidence="1">Associates loosely with the inner membrane.</text>
</comment>
<comment type="similarity">
    <text evidence="3">Belongs to the peptidase M76 family.</text>
</comment>
<feature type="chain" id="PRO_0000330051" description="Mitochondrial inner membrane protease ATP23">
    <location>
        <begin position="1"/>
        <end position="247"/>
    </location>
</feature>
<feature type="active site" evidence="2">
    <location>
        <position position="147"/>
    </location>
</feature>
<feature type="binding site" evidence="1">
    <location>
        <position position="146"/>
    </location>
    <ligand>
        <name>a divalent metal cation</name>
        <dbReference type="ChEBI" id="CHEBI:60240"/>
        <note>catalytic</note>
    </ligand>
</feature>
<feature type="binding site" evidence="1">
    <location>
        <position position="150"/>
    </location>
    <ligand>
        <name>a divalent metal cation</name>
        <dbReference type="ChEBI" id="CHEBI:60240"/>
        <note>catalytic</note>
    </ligand>
</feature>
<evidence type="ECO:0000250" key="1"/>
<evidence type="ECO:0000255" key="2">
    <source>
        <dbReference type="PROSITE-ProRule" id="PRU10095"/>
    </source>
</evidence>
<evidence type="ECO:0000305" key="3"/>
<reference key="1">
    <citation type="journal article" date="2004" name="Science">
        <title>The Ashbya gossypii genome as a tool for mapping the ancient Saccharomyces cerevisiae genome.</title>
        <authorList>
            <person name="Dietrich F.S."/>
            <person name="Voegeli S."/>
            <person name="Brachat S."/>
            <person name="Lerch A."/>
            <person name="Gates K."/>
            <person name="Steiner S."/>
            <person name="Mohr C."/>
            <person name="Poehlmann R."/>
            <person name="Luedi P."/>
            <person name="Choi S."/>
            <person name="Wing R.A."/>
            <person name="Flavier A."/>
            <person name="Gaffney T.D."/>
            <person name="Philippsen P."/>
        </authorList>
    </citation>
    <scope>NUCLEOTIDE SEQUENCE [LARGE SCALE GENOMIC DNA]</scope>
    <source>
        <strain>ATCC 10895 / CBS 109.51 / FGSC 9923 / NRRL Y-1056</strain>
    </source>
</reference>
<reference key="2">
    <citation type="journal article" date="2013" name="G3 (Bethesda)">
        <title>Genomes of Ashbya fungi isolated from insects reveal four mating-type loci, numerous translocations, lack of transposons, and distinct gene duplications.</title>
        <authorList>
            <person name="Dietrich F.S."/>
            <person name="Voegeli S."/>
            <person name="Kuo S."/>
            <person name="Philippsen P."/>
        </authorList>
    </citation>
    <scope>GENOME REANNOTATION</scope>
    <source>
        <strain>ATCC 10895 / CBS 109.51 / FGSC 9923 / NRRL Y-1056</strain>
    </source>
</reference>
<accession>Q75EL5</accession>
<proteinExistence type="inferred from homology"/>
<gene>
    <name type="primary">ATP23</name>
    <name type="ordered locus">AAR064W</name>
</gene>
<sequence>MSKEPNFPPSEKLEKVEAPADLRSIAGFEWWRRTFEYKTGLGLTPEAKVQYEKDYQYVLQREQCKQCYDNRDWLLKYSPTVVFMTQQIAKLNRRRTGDDSLHFDTSKIICDVCPEWKSGGFNPSLGILLCQNRIRDKWQMEDTLSHELVHQFDELKFEVDWMNLKHHACSEVRASNLSGECRLSQEFFRRGFNGSFGRGHQECVRRRAVLSVMGNPKCKDKAEAEQIVDEVWQSCFNDTRPFEEIYR</sequence>
<keyword id="KW-0378">Hydrolase</keyword>
<keyword id="KW-0472">Membrane</keyword>
<keyword id="KW-0479">Metal-binding</keyword>
<keyword id="KW-0482">Metalloprotease</keyword>
<keyword id="KW-0496">Mitochondrion</keyword>
<keyword id="KW-0999">Mitochondrion inner membrane</keyword>
<keyword id="KW-0645">Protease</keyword>
<keyword id="KW-1185">Reference proteome</keyword>
<name>ATP23_EREGS</name>